<evidence type="ECO:0000250" key="1"/>
<evidence type="ECO:0000250" key="2">
    <source>
        <dbReference type="UniProtKB" id="O75390"/>
    </source>
</evidence>
<evidence type="ECO:0000250" key="3">
    <source>
        <dbReference type="UniProtKB" id="P00889"/>
    </source>
</evidence>
<evidence type="ECO:0000255" key="4">
    <source>
        <dbReference type="PROSITE-ProRule" id="PRU10117"/>
    </source>
</evidence>
<evidence type="ECO:0000305" key="5"/>
<gene>
    <name type="primary">cs</name>
</gene>
<reference key="1">
    <citation type="journal article" date="2005" name="Am. J. Physiol.">
        <title>Mitochondrial enzyme content in the muscles of high-performance fish: evolution and variation among fiber types.</title>
        <authorList>
            <person name="Dalziel A.C."/>
            <person name="Moore S.E."/>
            <person name="Moyes C.D."/>
        </authorList>
    </citation>
    <scope>NUCLEOTIDE SEQUENCE [MRNA]</scope>
    <source>
        <tissue>Red muscle</tissue>
    </source>
</reference>
<protein>
    <recommendedName>
        <fullName>Citrate synthase, mitochondrial</fullName>
        <ecNumber>2.3.3.1</ecNumber>
    </recommendedName>
    <alternativeName>
        <fullName>Citrate (Si)-synthase</fullName>
    </alternativeName>
</protein>
<sequence length="469" mass="52191">MSFLSVSRLAPKLLNSKNATYFLVAARNASASTTNLKDVLADLIPKEQSRIKNFKQQYGKTNIGQITVDMVYGGMRGMKGLVYETSVLDPEEGIRFRGYSIPECQKLLPKAPGGEEPLPEGLFWLLVTGQVPTEEQVNWVSKEWAKRAALPSHVVTMLDNFPTNLHPMSQFSAAITALNSESSFARAYSEGVHKTKYWEFVYEDSMDLIAKLPCIAAKIYRNLYREGSSIGAIDSNLDWSHNFTNMLGYSEAQFTELMRLYLTIHSDHEGGNVSAHTSHLVGSALSDPYLSFSAAMNGLAGPLHGLANQEVLVWLTALQKEMGGEVSDERMRDYIWNTLKSGRVVPGYGHAVLRKTDPRYTCQREFALKHLPNDPMFKLVAQLYKIVPNVLLEQGKAKNPWPNVDAHSGVLLQYYGMTEMNYYTVLFGVSRALGVLAQLVWSRALGFPLERPKSMSTEGLMTLVGAKSG</sequence>
<proteinExistence type="evidence at transcript level"/>
<name>CISY_THUAL</name>
<feature type="transit peptide" description="Mitochondrion" evidence="1">
    <location>
        <begin position="1"/>
        <end position="30"/>
    </location>
</feature>
<feature type="chain" id="PRO_0000253906" description="Citrate synthase, mitochondrial">
    <location>
        <begin position="31"/>
        <end position="469"/>
    </location>
</feature>
<feature type="active site" evidence="4">
    <location>
        <position position="304"/>
    </location>
</feature>
<feature type="active site" evidence="4">
    <location>
        <position position="350"/>
    </location>
</feature>
<feature type="active site" evidence="4">
    <location>
        <position position="405"/>
    </location>
</feature>
<feature type="binding site" description="in chain A" evidence="2">
    <location>
        <position position="359"/>
    </location>
    <ligand>
        <name>oxaloacetate</name>
        <dbReference type="ChEBI" id="CHEBI:16452"/>
        <note>ligand shared between homodimeric partners</note>
    </ligand>
</feature>
<feature type="binding site" description="in chain A" evidence="2">
    <location>
        <position position="431"/>
    </location>
    <ligand>
        <name>oxaloacetate</name>
        <dbReference type="ChEBI" id="CHEBI:16452"/>
        <note>ligand shared between homodimeric partners</note>
    </ligand>
</feature>
<feature type="binding site" description="in chain B" evidence="2">
    <location>
        <position position="451"/>
    </location>
    <ligand>
        <name>oxaloacetate</name>
        <dbReference type="ChEBI" id="CHEBI:16452"/>
        <note>ligand shared between homodimeric partners</note>
    </ligand>
</feature>
<comment type="function">
    <text evidence="5">Key enzyme of the Krebs tricarboxylic acid cycle which catalyzes the synthesis of citrate from acetyl coenzyme A and oxaloacetate.</text>
</comment>
<comment type="catalytic activity">
    <reaction evidence="4">
        <text>oxaloacetate + acetyl-CoA + H2O = citrate + CoA + H(+)</text>
        <dbReference type="Rhea" id="RHEA:16845"/>
        <dbReference type="ChEBI" id="CHEBI:15377"/>
        <dbReference type="ChEBI" id="CHEBI:15378"/>
        <dbReference type="ChEBI" id="CHEBI:16452"/>
        <dbReference type="ChEBI" id="CHEBI:16947"/>
        <dbReference type="ChEBI" id="CHEBI:57287"/>
        <dbReference type="ChEBI" id="CHEBI:57288"/>
        <dbReference type="EC" id="2.3.3.1"/>
    </reaction>
</comment>
<comment type="pathway">
    <text>Carbohydrate metabolism; tricarboxylic acid cycle; isocitrate from oxaloacetate: step 1/2.</text>
</comment>
<comment type="subunit">
    <text evidence="2">Homodimer.</text>
</comment>
<comment type="subcellular location">
    <subcellularLocation>
        <location evidence="3">Mitochondrion matrix</location>
    </subcellularLocation>
</comment>
<comment type="miscellaneous">
    <text>Citrate synthase is found in nearly all cells capable of oxidative metabolism.</text>
</comment>
<comment type="similarity">
    <text evidence="5">Belongs to the citrate synthase family.</text>
</comment>
<keyword id="KW-0496">Mitochondrion</keyword>
<keyword id="KW-0808">Transferase</keyword>
<keyword id="KW-0809">Transit peptide</keyword>
<keyword id="KW-0816">Tricarboxylic acid cycle</keyword>
<organism>
    <name type="scientific">Thunnus albacares</name>
    <name type="common">Yellowfin tuna</name>
    <name type="synonym">Neothunnus macropterus</name>
    <dbReference type="NCBI Taxonomy" id="8236"/>
    <lineage>
        <taxon>Eukaryota</taxon>
        <taxon>Metazoa</taxon>
        <taxon>Chordata</taxon>
        <taxon>Craniata</taxon>
        <taxon>Vertebrata</taxon>
        <taxon>Euteleostomi</taxon>
        <taxon>Actinopterygii</taxon>
        <taxon>Neopterygii</taxon>
        <taxon>Teleostei</taxon>
        <taxon>Neoteleostei</taxon>
        <taxon>Acanthomorphata</taxon>
        <taxon>Pelagiaria</taxon>
        <taxon>Scombriformes</taxon>
        <taxon>Scombridae</taxon>
        <taxon>Thunnus</taxon>
    </lineage>
</organism>
<dbReference type="EC" id="2.3.3.1"/>
<dbReference type="EMBL" id="AY461848">
    <property type="protein sequence ID" value="AAR98858.1"/>
    <property type="molecule type" value="mRNA"/>
</dbReference>
<dbReference type="RefSeq" id="XP_044207151.1">
    <property type="nucleotide sequence ID" value="XM_044351216.1"/>
</dbReference>
<dbReference type="SMR" id="Q6S9V9"/>
<dbReference type="GeneID" id="122982149"/>
<dbReference type="OrthoDB" id="8017587at2759"/>
<dbReference type="UniPathway" id="UPA00223">
    <property type="reaction ID" value="UER00717"/>
</dbReference>
<dbReference type="GO" id="GO:0005759">
    <property type="term" value="C:mitochondrial matrix"/>
    <property type="evidence" value="ECO:0000250"/>
    <property type="project" value="UniProtKB"/>
</dbReference>
<dbReference type="GO" id="GO:0004108">
    <property type="term" value="F:citrate (Si)-synthase activity"/>
    <property type="evidence" value="ECO:0000250"/>
    <property type="project" value="UniProtKB"/>
</dbReference>
<dbReference type="GO" id="GO:0042802">
    <property type="term" value="F:identical protein binding"/>
    <property type="evidence" value="ECO:0000250"/>
    <property type="project" value="UniProtKB"/>
</dbReference>
<dbReference type="GO" id="GO:0005975">
    <property type="term" value="P:carbohydrate metabolic process"/>
    <property type="evidence" value="ECO:0000250"/>
    <property type="project" value="UniProtKB"/>
</dbReference>
<dbReference type="GO" id="GO:0006101">
    <property type="term" value="P:citrate metabolic process"/>
    <property type="evidence" value="ECO:0007669"/>
    <property type="project" value="InterPro"/>
</dbReference>
<dbReference type="GO" id="GO:0006099">
    <property type="term" value="P:tricarboxylic acid cycle"/>
    <property type="evidence" value="ECO:0007669"/>
    <property type="project" value="UniProtKB-UniPathway"/>
</dbReference>
<dbReference type="CDD" id="cd06105">
    <property type="entry name" value="ScCit1-2_like"/>
    <property type="match status" value="1"/>
</dbReference>
<dbReference type="FunFam" id="1.10.230.10:FF:000001">
    <property type="entry name" value="Citrate synthase"/>
    <property type="match status" value="1"/>
</dbReference>
<dbReference type="FunFam" id="1.10.580.10:FF:000001">
    <property type="entry name" value="Citrate synthase"/>
    <property type="match status" value="1"/>
</dbReference>
<dbReference type="Gene3D" id="1.10.580.10">
    <property type="entry name" value="Citrate Synthase, domain 1"/>
    <property type="match status" value="1"/>
</dbReference>
<dbReference type="Gene3D" id="1.10.230.10">
    <property type="entry name" value="Cytochrome P450-Terp, domain 2"/>
    <property type="match status" value="1"/>
</dbReference>
<dbReference type="InterPro" id="IPR016142">
    <property type="entry name" value="Citrate_synth-like_lrg_a-sub"/>
</dbReference>
<dbReference type="InterPro" id="IPR016143">
    <property type="entry name" value="Citrate_synth-like_sm_a-sub"/>
</dbReference>
<dbReference type="InterPro" id="IPR002020">
    <property type="entry name" value="Citrate_synthase"/>
</dbReference>
<dbReference type="InterPro" id="IPR019810">
    <property type="entry name" value="Citrate_synthase_AS"/>
</dbReference>
<dbReference type="InterPro" id="IPR010109">
    <property type="entry name" value="Citrate_synthase_euk"/>
</dbReference>
<dbReference type="InterPro" id="IPR036969">
    <property type="entry name" value="Citrate_synthase_sf"/>
</dbReference>
<dbReference type="NCBIfam" id="TIGR01793">
    <property type="entry name" value="cit_synth_euk"/>
    <property type="match status" value="1"/>
</dbReference>
<dbReference type="NCBIfam" id="NF007128">
    <property type="entry name" value="PRK09569.1"/>
    <property type="match status" value="1"/>
</dbReference>
<dbReference type="PANTHER" id="PTHR11739">
    <property type="entry name" value="CITRATE SYNTHASE"/>
    <property type="match status" value="1"/>
</dbReference>
<dbReference type="PANTHER" id="PTHR11739:SF8">
    <property type="entry name" value="CITRATE SYNTHASE, MITOCHONDRIAL"/>
    <property type="match status" value="1"/>
</dbReference>
<dbReference type="Pfam" id="PF00285">
    <property type="entry name" value="Citrate_synt"/>
    <property type="match status" value="1"/>
</dbReference>
<dbReference type="PRINTS" id="PR00143">
    <property type="entry name" value="CITRTSNTHASE"/>
</dbReference>
<dbReference type="SUPFAM" id="SSF48256">
    <property type="entry name" value="Citrate synthase"/>
    <property type="match status" value="1"/>
</dbReference>
<dbReference type="PROSITE" id="PS00480">
    <property type="entry name" value="CITRATE_SYNTHASE"/>
    <property type="match status" value="1"/>
</dbReference>
<accession>Q6S9V9</accession>